<reference key="1">
    <citation type="journal article" date="2003" name="Proc. Natl. Acad. Sci. U.S.A.">
        <title>The complete genome sequence of the Arabidopsis and tomato pathogen Pseudomonas syringae pv. tomato DC3000.</title>
        <authorList>
            <person name="Buell C.R."/>
            <person name="Joardar V."/>
            <person name="Lindeberg M."/>
            <person name="Selengut J."/>
            <person name="Paulsen I.T."/>
            <person name="Gwinn M.L."/>
            <person name="Dodson R.J."/>
            <person name="DeBoy R.T."/>
            <person name="Durkin A.S."/>
            <person name="Kolonay J.F."/>
            <person name="Madupu R."/>
            <person name="Daugherty S.C."/>
            <person name="Brinkac L.M."/>
            <person name="Beanan M.J."/>
            <person name="Haft D.H."/>
            <person name="Nelson W.C."/>
            <person name="Davidsen T.M."/>
            <person name="Zafar N."/>
            <person name="Zhou L."/>
            <person name="Liu J."/>
            <person name="Yuan Q."/>
            <person name="Khouri H.M."/>
            <person name="Fedorova N.B."/>
            <person name="Tran B."/>
            <person name="Russell D."/>
            <person name="Berry K.J."/>
            <person name="Utterback T.R."/>
            <person name="Van Aken S.E."/>
            <person name="Feldblyum T.V."/>
            <person name="D'Ascenzo M."/>
            <person name="Deng W.-L."/>
            <person name="Ramos A.R."/>
            <person name="Alfano J.R."/>
            <person name="Cartinhour S."/>
            <person name="Chatterjee A.K."/>
            <person name="Delaney T.P."/>
            <person name="Lazarowitz S.G."/>
            <person name="Martin G.B."/>
            <person name="Schneider D.J."/>
            <person name="Tang X."/>
            <person name="Bender C.L."/>
            <person name="White O."/>
            <person name="Fraser C.M."/>
            <person name="Collmer A."/>
        </authorList>
    </citation>
    <scope>NUCLEOTIDE SEQUENCE [LARGE SCALE GENOMIC DNA]</scope>
    <source>
        <strain>ATCC BAA-871 / DC3000</strain>
    </source>
</reference>
<organism>
    <name type="scientific">Pseudomonas syringae pv. tomato (strain ATCC BAA-871 / DC3000)</name>
    <dbReference type="NCBI Taxonomy" id="223283"/>
    <lineage>
        <taxon>Bacteria</taxon>
        <taxon>Pseudomonadati</taxon>
        <taxon>Pseudomonadota</taxon>
        <taxon>Gammaproteobacteria</taxon>
        <taxon>Pseudomonadales</taxon>
        <taxon>Pseudomonadaceae</taxon>
        <taxon>Pseudomonas</taxon>
    </lineage>
</organism>
<comment type="function">
    <text evidence="1">Part of the Tol-Pal system, which plays a role in outer membrane invagination during cell division and is important for maintaining outer membrane integrity.</text>
</comment>
<comment type="subunit">
    <text evidence="1">The Tol-Pal system is composed of five core proteins: the inner membrane proteins TolA, TolQ and TolR, the periplasmic protein TolB and the outer membrane protein Pal. They form a network linking the inner and outer membranes and the peptidoglycan layer.</text>
</comment>
<comment type="subcellular location">
    <subcellularLocation>
        <location evidence="1">Periplasm</location>
    </subcellularLocation>
</comment>
<comment type="similarity">
    <text evidence="1">Belongs to the TolB family.</text>
</comment>
<evidence type="ECO:0000255" key="1">
    <source>
        <dbReference type="HAMAP-Rule" id="MF_00671"/>
    </source>
</evidence>
<gene>
    <name evidence="1" type="primary">tolB</name>
    <name type="ordered locus">PSPTO_3972</name>
</gene>
<feature type="signal peptide" evidence="1">
    <location>
        <begin position="1"/>
        <end position="21"/>
    </location>
</feature>
<feature type="chain" id="PRO_0000034675" description="Tol-Pal system protein TolB" evidence="1">
    <location>
        <begin position="22"/>
        <end position="433"/>
    </location>
</feature>
<name>TOLB_PSESM</name>
<accession>Q87Y40</accession>
<protein>
    <recommendedName>
        <fullName evidence="1">Tol-Pal system protein TolB</fullName>
    </recommendedName>
</protein>
<proteinExistence type="inferred from homology"/>
<sequence length="433" mass="47707">MINLFRGLLVVLCFASAMVAAEEKNILVTSGSDRAAPIAVVPFGWQGGNVLPEDMAEIISNDLRNSGYYAPIPKQNMISLPTQASEVIFRDWKALGAQYVMVGNITPAGGRLQIQYALFNVATEQQVLTGNVSGTNDQLRDMAHYIADQSFEKLTGIKGAFSTRMLYVTAERFSENNTRYTLQRSDYDGARAVTLLQSREPILSPRFAPDGKRIAYVSFEQKRPRIFVQHIDTGRREQITNFEGLNGAPAWSPDGSKLAFVLSKDGNPEIYVINLASRQLSRVTNDSSIDTEPFFGKDGSTLYFTSDRGGKPQIYKTNINGGGAERVTFVGNYNANPKLSADEKTLVMIHRQDGFTNFKVAVQDLARGSVKILTDSNLDESPTVAPNGTMVIYATRQQGRGVLMLVSINGRVRLPLPTAQGEVREPSWSPYLN</sequence>
<dbReference type="EMBL" id="AE016853">
    <property type="protein sequence ID" value="AAO57431.1"/>
    <property type="molecule type" value="Genomic_DNA"/>
</dbReference>
<dbReference type="RefSeq" id="NP_793736.1">
    <property type="nucleotide sequence ID" value="NC_004578.1"/>
</dbReference>
<dbReference type="SMR" id="Q87Y40"/>
<dbReference type="STRING" id="223283.PSPTO_3972"/>
<dbReference type="KEGG" id="pst:PSPTO_3972"/>
<dbReference type="PATRIC" id="fig|223283.9.peg.4071"/>
<dbReference type="eggNOG" id="COG0823">
    <property type="taxonomic scope" value="Bacteria"/>
</dbReference>
<dbReference type="HOGENOM" id="CLU_047123_0_0_6"/>
<dbReference type="OrthoDB" id="9802240at2"/>
<dbReference type="PhylomeDB" id="Q87Y40"/>
<dbReference type="Proteomes" id="UP000002515">
    <property type="component" value="Chromosome"/>
</dbReference>
<dbReference type="GO" id="GO:0042597">
    <property type="term" value="C:periplasmic space"/>
    <property type="evidence" value="ECO:0007669"/>
    <property type="project" value="UniProtKB-SubCell"/>
</dbReference>
<dbReference type="GO" id="GO:0051301">
    <property type="term" value="P:cell division"/>
    <property type="evidence" value="ECO:0007669"/>
    <property type="project" value="UniProtKB-UniRule"/>
</dbReference>
<dbReference type="GO" id="GO:0017038">
    <property type="term" value="P:protein import"/>
    <property type="evidence" value="ECO:0007669"/>
    <property type="project" value="InterPro"/>
</dbReference>
<dbReference type="Gene3D" id="2.120.10.30">
    <property type="entry name" value="TolB, C-terminal domain"/>
    <property type="match status" value="1"/>
</dbReference>
<dbReference type="Gene3D" id="3.40.50.10070">
    <property type="entry name" value="TolB, N-terminal domain"/>
    <property type="match status" value="1"/>
</dbReference>
<dbReference type="HAMAP" id="MF_00671">
    <property type="entry name" value="TolB"/>
    <property type="match status" value="1"/>
</dbReference>
<dbReference type="InterPro" id="IPR011042">
    <property type="entry name" value="6-blade_b-propeller_TolB-like"/>
</dbReference>
<dbReference type="InterPro" id="IPR011659">
    <property type="entry name" value="PD40"/>
</dbReference>
<dbReference type="InterPro" id="IPR014167">
    <property type="entry name" value="Tol-Pal_TolB"/>
</dbReference>
<dbReference type="InterPro" id="IPR007195">
    <property type="entry name" value="TolB_N"/>
</dbReference>
<dbReference type="NCBIfam" id="TIGR02800">
    <property type="entry name" value="propeller_TolB"/>
    <property type="match status" value="1"/>
</dbReference>
<dbReference type="PANTHER" id="PTHR36842:SF1">
    <property type="entry name" value="PROTEIN TOLB"/>
    <property type="match status" value="1"/>
</dbReference>
<dbReference type="PANTHER" id="PTHR36842">
    <property type="entry name" value="PROTEIN TOLB HOMOLOG"/>
    <property type="match status" value="1"/>
</dbReference>
<dbReference type="Pfam" id="PF07676">
    <property type="entry name" value="PD40"/>
    <property type="match status" value="4"/>
</dbReference>
<dbReference type="Pfam" id="PF04052">
    <property type="entry name" value="TolB_N"/>
    <property type="match status" value="1"/>
</dbReference>
<dbReference type="SUPFAM" id="SSF52964">
    <property type="entry name" value="TolB, N-terminal domain"/>
    <property type="match status" value="1"/>
</dbReference>
<dbReference type="SUPFAM" id="SSF69304">
    <property type="entry name" value="Tricorn protease N-terminal domain"/>
    <property type="match status" value="1"/>
</dbReference>
<keyword id="KW-0131">Cell cycle</keyword>
<keyword id="KW-0132">Cell division</keyword>
<keyword id="KW-0574">Periplasm</keyword>
<keyword id="KW-1185">Reference proteome</keyword>
<keyword id="KW-0732">Signal</keyword>